<name>RIMO_CERS5</name>
<sequence length="457" mass="50331">MGAMAQNPPNLRPDLAPRLVIDSPRREGQPTIGMVSLGCPKALVDSERILTRLRAEGYAISPDYAGADAVIVNTCGFLDSAKAESLEAIGEALRENGRVIVTGCLGAEPDYITGAHPKVLAVTGPHQYEQVLDAVHGAVPPAPDPFVDLLPATGVRLTPRHFSYLKISEGCNHSCRFCIIPDMRGRLVSRPERAVLREAEKLVEAGVRELLVISQDTSAYGTDWKGPVRFPILPLARELGQLGAWVRLHYVYPYPHVRELIPLMAEGLILPYLDIPFQHAHPEVLKRMARPAAAARTLDEIAAWRRDCPDITLRSTFIVGYPGETEEEFQTLLDWLDEAQLDRVGCFQYENVAGARSNALPDHVAPELKQERWERFMQKAQAISEAKLAARIGQRLEVIVDEVDGEGATCRTKADAPEIDGNLFIDEGFEALSPGDLLTVEVEEAGEYDLWGRAVLV</sequence>
<proteinExistence type="inferred from homology"/>
<gene>
    <name evidence="1" type="primary">rimO</name>
    <name type="ordered locus">Rsph17025_1047</name>
</gene>
<dbReference type="EC" id="2.8.4.4" evidence="1"/>
<dbReference type="EMBL" id="CP000661">
    <property type="protein sequence ID" value="ABP69948.1"/>
    <property type="status" value="ALT_INIT"/>
    <property type="molecule type" value="Genomic_DNA"/>
</dbReference>
<dbReference type="SMR" id="A4WRD4"/>
<dbReference type="STRING" id="349102.Rsph17025_1047"/>
<dbReference type="KEGG" id="rsq:Rsph17025_1047"/>
<dbReference type="eggNOG" id="COG0621">
    <property type="taxonomic scope" value="Bacteria"/>
</dbReference>
<dbReference type="HOGENOM" id="CLU_018697_0_0_5"/>
<dbReference type="BioCyc" id="RSPH349102:G1G8M-1073-MONOMER"/>
<dbReference type="GO" id="GO:0005829">
    <property type="term" value="C:cytosol"/>
    <property type="evidence" value="ECO:0007669"/>
    <property type="project" value="TreeGrafter"/>
</dbReference>
<dbReference type="GO" id="GO:0051539">
    <property type="term" value="F:4 iron, 4 sulfur cluster binding"/>
    <property type="evidence" value="ECO:0007669"/>
    <property type="project" value="UniProtKB-UniRule"/>
</dbReference>
<dbReference type="GO" id="GO:0035599">
    <property type="term" value="F:aspartic acid methylthiotransferase activity"/>
    <property type="evidence" value="ECO:0007669"/>
    <property type="project" value="TreeGrafter"/>
</dbReference>
<dbReference type="GO" id="GO:0046872">
    <property type="term" value="F:metal ion binding"/>
    <property type="evidence" value="ECO:0007669"/>
    <property type="project" value="UniProtKB-KW"/>
</dbReference>
<dbReference type="GO" id="GO:0103039">
    <property type="term" value="F:protein methylthiotransferase activity"/>
    <property type="evidence" value="ECO:0007669"/>
    <property type="project" value="UniProtKB-EC"/>
</dbReference>
<dbReference type="GO" id="GO:0006400">
    <property type="term" value="P:tRNA modification"/>
    <property type="evidence" value="ECO:0007669"/>
    <property type="project" value="InterPro"/>
</dbReference>
<dbReference type="CDD" id="cd01335">
    <property type="entry name" value="Radical_SAM"/>
    <property type="match status" value="1"/>
</dbReference>
<dbReference type="FunFam" id="3.40.50.12160:FF:000002">
    <property type="entry name" value="Ribosomal protein S12 methylthiotransferase RimO"/>
    <property type="match status" value="1"/>
</dbReference>
<dbReference type="FunFam" id="3.80.30.20:FF:000001">
    <property type="entry name" value="tRNA-2-methylthio-N(6)-dimethylallyladenosine synthase 2"/>
    <property type="match status" value="1"/>
</dbReference>
<dbReference type="Gene3D" id="3.40.50.12160">
    <property type="entry name" value="Methylthiotransferase, N-terminal domain"/>
    <property type="match status" value="1"/>
</dbReference>
<dbReference type="Gene3D" id="2.40.50.140">
    <property type="entry name" value="Nucleic acid-binding proteins"/>
    <property type="match status" value="1"/>
</dbReference>
<dbReference type="Gene3D" id="3.80.30.20">
    <property type="entry name" value="tm_1862 like domain"/>
    <property type="match status" value="1"/>
</dbReference>
<dbReference type="HAMAP" id="MF_01865">
    <property type="entry name" value="MTTase_RimO"/>
    <property type="match status" value="1"/>
</dbReference>
<dbReference type="InterPro" id="IPR006638">
    <property type="entry name" value="Elp3/MiaA/NifB-like_rSAM"/>
</dbReference>
<dbReference type="InterPro" id="IPR005839">
    <property type="entry name" value="Methylthiotransferase"/>
</dbReference>
<dbReference type="InterPro" id="IPR013848">
    <property type="entry name" value="Methylthiotransferase_N"/>
</dbReference>
<dbReference type="InterPro" id="IPR038135">
    <property type="entry name" value="Methylthiotransferase_N_sf"/>
</dbReference>
<dbReference type="InterPro" id="IPR012340">
    <property type="entry name" value="NA-bd_OB-fold"/>
</dbReference>
<dbReference type="InterPro" id="IPR005840">
    <property type="entry name" value="Ribosomal_uS12_MeSTrfase_RimO"/>
</dbReference>
<dbReference type="InterPro" id="IPR007197">
    <property type="entry name" value="rSAM"/>
</dbReference>
<dbReference type="InterPro" id="IPR023404">
    <property type="entry name" value="rSAM_horseshoe"/>
</dbReference>
<dbReference type="InterPro" id="IPR002792">
    <property type="entry name" value="TRAM_dom"/>
</dbReference>
<dbReference type="NCBIfam" id="TIGR01125">
    <property type="entry name" value="30S ribosomal protein S12 methylthiotransferase RimO"/>
    <property type="match status" value="1"/>
</dbReference>
<dbReference type="NCBIfam" id="TIGR00089">
    <property type="entry name" value="MiaB/RimO family radical SAM methylthiotransferase"/>
    <property type="match status" value="1"/>
</dbReference>
<dbReference type="PANTHER" id="PTHR43837">
    <property type="entry name" value="RIBOSOMAL PROTEIN S12 METHYLTHIOTRANSFERASE RIMO"/>
    <property type="match status" value="1"/>
</dbReference>
<dbReference type="PANTHER" id="PTHR43837:SF1">
    <property type="entry name" value="RIBOSOMAL PROTEIN US12 METHYLTHIOTRANSFERASE RIMO"/>
    <property type="match status" value="1"/>
</dbReference>
<dbReference type="Pfam" id="PF04055">
    <property type="entry name" value="Radical_SAM"/>
    <property type="match status" value="1"/>
</dbReference>
<dbReference type="Pfam" id="PF18693">
    <property type="entry name" value="TRAM_2"/>
    <property type="match status" value="1"/>
</dbReference>
<dbReference type="Pfam" id="PF00919">
    <property type="entry name" value="UPF0004"/>
    <property type="match status" value="1"/>
</dbReference>
<dbReference type="SFLD" id="SFLDG01082">
    <property type="entry name" value="B12-binding_domain_containing"/>
    <property type="match status" value="1"/>
</dbReference>
<dbReference type="SFLD" id="SFLDS00029">
    <property type="entry name" value="Radical_SAM"/>
    <property type="match status" value="1"/>
</dbReference>
<dbReference type="SFLD" id="SFLDF00274">
    <property type="entry name" value="ribosomal_protein_S12_methylth"/>
    <property type="match status" value="1"/>
</dbReference>
<dbReference type="SMART" id="SM00729">
    <property type="entry name" value="Elp3"/>
    <property type="match status" value="1"/>
</dbReference>
<dbReference type="SUPFAM" id="SSF102114">
    <property type="entry name" value="Radical SAM enzymes"/>
    <property type="match status" value="1"/>
</dbReference>
<dbReference type="PROSITE" id="PS51449">
    <property type="entry name" value="MTTASE_N"/>
    <property type="match status" value="1"/>
</dbReference>
<dbReference type="PROSITE" id="PS51918">
    <property type="entry name" value="RADICAL_SAM"/>
    <property type="match status" value="1"/>
</dbReference>
<dbReference type="PROSITE" id="PS50926">
    <property type="entry name" value="TRAM"/>
    <property type="match status" value="1"/>
</dbReference>
<comment type="function">
    <text evidence="1">Catalyzes the methylthiolation of an aspartic acid residue of ribosomal protein uS12.</text>
</comment>
<comment type="catalytic activity">
    <reaction evidence="1">
        <text>L-aspartate(89)-[ribosomal protein uS12]-hydrogen + (sulfur carrier)-SH + AH2 + 2 S-adenosyl-L-methionine = 3-methylsulfanyl-L-aspartate(89)-[ribosomal protein uS12]-hydrogen + (sulfur carrier)-H + 5'-deoxyadenosine + L-methionine + A + S-adenosyl-L-homocysteine + 2 H(+)</text>
        <dbReference type="Rhea" id="RHEA:37087"/>
        <dbReference type="Rhea" id="RHEA-COMP:10460"/>
        <dbReference type="Rhea" id="RHEA-COMP:10461"/>
        <dbReference type="Rhea" id="RHEA-COMP:14737"/>
        <dbReference type="Rhea" id="RHEA-COMP:14739"/>
        <dbReference type="ChEBI" id="CHEBI:13193"/>
        <dbReference type="ChEBI" id="CHEBI:15378"/>
        <dbReference type="ChEBI" id="CHEBI:17319"/>
        <dbReference type="ChEBI" id="CHEBI:17499"/>
        <dbReference type="ChEBI" id="CHEBI:29917"/>
        <dbReference type="ChEBI" id="CHEBI:29961"/>
        <dbReference type="ChEBI" id="CHEBI:57844"/>
        <dbReference type="ChEBI" id="CHEBI:57856"/>
        <dbReference type="ChEBI" id="CHEBI:59789"/>
        <dbReference type="ChEBI" id="CHEBI:64428"/>
        <dbReference type="ChEBI" id="CHEBI:73599"/>
        <dbReference type="EC" id="2.8.4.4"/>
    </reaction>
</comment>
<comment type="cofactor">
    <cofactor evidence="1">
        <name>[4Fe-4S] cluster</name>
        <dbReference type="ChEBI" id="CHEBI:49883"/>
    </cofactor>
    <text evidence="1">Binds 2 [4Fe-4S] clusters. One cluster is coordinated with 3 cysteines and an exchangeable S-adenosyl-L-methionine.</text>
</comment>
<comment type="subcellular location">
    <subcellularLocation>
        <location evidence="1">Cytoplasm</location>
    </subcellularLocation>
</comment>
<comment type="similarity">
    <text evidence="1">Belongs to the methylthiotransferase family. RimO subfamily.</text>
</comment>
<comment type="sequence caution" evidence="3">
    <conflict type="erroneous initiation">
        <sequence resource="EMBL-CDS" id="ABP69948"/>
    </conflict>
</comment>
<organism>
    <name type="scientific">Cereibacter sphaeroides (strain ATCC 17025 / ATH 2.4.3)</name>
    <name type="common">Rhodobacter sphaeroides</name>
    <dbReference type="NCBI Taxonomy" id="349102"/>
    <lineage>
        <taxon>Bacteria</taxon>
        <taxon>Pseudomonadati</taxon>
        <taxon>Pseudomonadota</taxon>
        <taxon>Alphaproteobacteria</taxon>
        <taxon>Rhodobacterales</taxon>
        <taxon>Paracoccaceae</taxon>
        <taxon>Cereibacter</taxon>
    </lineage>
</organism>
<evidence type="ECO:0000255" key="1">
    <source>
        <dbReference type="HAMAP-Rule" id="MF_01865"/>
    </source>
</evidence>
<evidence type="ECO:0000255" key="2">
    <source>
        <dbReference type="PROSITE-ProRule" id="PRU01266"/>
    </source>
</evidence>
<evidence type="ECO:0000305" key="3"/>
<reference key="1">
    <citation type="submission" date="2007-04" db="EMBL/GenBank/DDBJ databases">
        <title>Complete sequence of chromosome of Rhodobacter sphaeroides ATCC 17025.</title>
        <authorList>
            <consortium name="US DOE Joint Genome Institute"/>
            <person name="Copeland A."/>
            <person name="Lucas S."/>
            <person name="Lapidus A."/>
            <person name="Barry K."/>
            <person name="Detter J.C."/>
            <person name="Glavina del Rio T."/>
            <person name="Hammon N."/>
            <person name="Israni S."/>
            <person name="Dalin E."/>
            <person name="Tice H."/>
            <person name="Pitluck S."/>
            <person name="Chertkov O."/>
            <person name="Brettin T."/>
            <person name="Bruce D."/>
            <person name="Han C."/>
            <person name="Schmutz J."/>
            <person name="Larimer F."/>
            <person name="Land M."/>
            <person name="Hauser L."/>
            <person name="Kyrpides N."/>
            <person name="Kim E."/>
            <person name="Richardson P."/>
            <person name="Mackenzie C."/>
            <person name="Choudhary M."/>
            <person name="Donohue T.J."/>
            <person name="Kaplan S."/>
        </authorList>
    </citation>
    <scope>NUCLEOTIDE SEQUENCE [LARGE SCALE GENOMIC DNA]</scope>
    <source>
        <strain>ATCC 17025 / ATH 2.4.3</strain>
    </source>
</reference>
<keyword id="KW-0004">4Fe-4S</keyword>
<keyword id="KW-0963">Cytoplasm</keyword>
<keyword id="KW-0408">Iron</keyword>
<keyword id="KW-0411">Iron-sulfur</keyword>
<keyword id="KW-0479">Metal-binding</keyword>
<keyword id="KW-0949">S-adenosyl-L-methionine</keyword>
<keyword id="KW-0808">Transferase</keyword>
<feature type="chain" id="PRO_0000374966" description="Ribosomal protein uS12 methylthiotransferase RimO">
    <location>
        <begin position="1"/>
        <end position="457"/>
    </location>
</feature>
<feature type="domain" description="MTTase N-terminal" evidence="1">
    <location>
        <begin position="30"/>
        <end position="140"/>
    </location>
</feature>
<feature type="domain" description="Radical SAM core" evidence="2">
    <location>
        <begin position="157"/>
        <end position="386"/>
    </location>
</feature>
<feature type="domain" description="TRAM" evidence="1">
    <location>
        <begin position="389"/>
        <end position="456"/>
    </location>
</feature>
<feature type="binding site" evidence="1">
    <location>
        <position position="39"/>
    </location>
    <ligand>
        <name>[4Fe-4S] cluster</name>
        <dbReference type="ChEBI" id="CHEBI:49883"/>
        <label>1</label>
    </ligand>
</feature>
<feature type="binding site" evidence="1">
    <location>
        <position position="75"/>
    </location>
    <ligand>
        <name>[4Fe-4S] cluster</name>
        <dbReference type="ChEBI" id="CHEBI:49883"/>
        <label>1</label>
    </ligand>
</feature>
<feature type="binding site" evidence="1">
    <location>
        <position position="104"/>
    </location>
    <ligand>
        <name>[4Fe-4S] cluster</name>
        <dbReference type="ChEBI" id="CHEBI:49883"/>
        <label>1</label>
    </ligand>
</feature>
<feature type="binding site" evidence="1">
    <location>
        <position position="171"/>
    </location>
    <ligand>
        <name>[4Fe-4S] cluster</name>
        <dbReference type="ChEBI" id="CHEBI:49883"/>
        <label>2</label>
        <note>4Fe-4S-S-AdoMet</note>
    </ligand>
</feature>
<feature type="binding site" evidence="1">
    <location>
        <position position="175"/>
    </location>
    <ligand>
        <name>[4Fe-4S] cluster</name>
        <dbReference type="ChEBI" id="CHEBI:49883"/>
        <label>2</label>
        <note>4Fe-4S-S-AdoMet</note>
    </ligand>
</feature>
<feature type="binding site" evidence="1">
    <location>
        <position position="178"/>
    </location>
    <ligand>
        <name>[4Fe-4S] cluster</name>
        <dbReference type="ChEBI" id="CHEBI:49883"/>
        <label>2</label>
        <note>4Fe-4S-S-AdoMet</note>
    </ligand>
</feature>
<accession>A4WRD4</accession>
<protein>
    <recommendedName>
        <fullName evidence="1">Ribosomal protein uS12 methylthiotransferase RimO</fullName>
        <shortName evidence="1">uS12 MTTase</shortName>
        <shortName evidence="1">uS12 methylthiotransferase</shortName>
        <ecNumber evidence="1">2.8.4.4</ecNumber>
    </recommendedName>
    <alternativeName>
        <fullName evidence="1">Ribosomal protein uS12 (aspartate-C(3))-methylthiotransferase</fullName>
    </alternativeName>
    <alternativeName>
        <fullName evidence="1">Ribosome maturation factor RimO</fullName>
    </alternativeName>
</protein>